<sequence>MSVAFVPDWLRGKAEVNQETIQRLLEENDQLIRCIVEYQNKGRGNECVQYQHVLHRNLIYLATIADASPTSTSKAME</sequence>
<name>S18L2_HUMAN</name>
<evidence type="ECO:0000255" key="1"/>
<evidence type="ECO:0000305" key="2"/>
<dbReference type="EMBL" id="AF201950">
    <property type="protein sequence ID" value="AAF17242.1"/>
    <property type="molecule type" value="mRNA"/>
</dbReference>
<dbReference type="EMBL" id="AK312225">
    <property type="protein sequence ID" value="BAG35158.1"/>
    <property type="molecule type" value="mRNA"/>
</dbReference>
<dbReference type="EMBL" id="CH471055">
    <property type="protein sequence ID" value="EAW64657.1"/>
    <property type="molecule type" value="Genomic_DNA"/>
</dbReference>
<dbReference type="EMBL" id="BC017804">
    <property type="protein sequence ID" value="AAH17804.1"/>
    <property type="molecule type" value="mRNA"/>
</dbReference>
<dbReference type="CCDS" id="CCDS2701.1"/>
<dbReference type="RefSeq" id="NP_001357229.1">
    <property type="nucleotide sequence ID" value="NM_001370300.1"/>
</dbReference>
<dbReference type="RefSeq" id="NP_057389.1">
    <property type="nucleotide sequence ID" value="NM_016305.4"/>
</dbReference>
<dbReference type="RefSeq" id="XP_016862037.1">
    <property type="nucleotide sequence ID" value="XM_017006548.1"/>
</dbReference>
<dbReference type="RefSeq" id="XP_016862038.1">
    <property type="nucleotide sequence ID" value="XM_017006549.1"/>
</dbReference>
<dbReference type="RefSeq" id="XP_054202716.1">
    <property type="nucleotide sequence ID" value="XM_054346741.1"/>
</dbReference>
<dbReference type="RefSeq" id="XP_054202717.1">
    <property type="nucleotide sequence ID" value="XM_054346742.1"/>
</dbReference>
<dbReference type="RefSeq" id="XP_054202718.1">
    <property type="nucleotide sequence ID" value="XM_054346743.1"/>
</dbReference>
<dbReference type="RefSeq" id="XP_054202719.1">
    <property type="nucleotide sequence ID" value="XM_054346744.1"/>
</dbReference>
<dbReference type="RefSeq" id="XP_054202720.1">
    <property type="nucleotide sequence ID" value="XM_054346745.1"/>
</dbReference>
<dbReference type="SMR" id="Q9UHA2"/>
<dbReference type="BioGRID" id="119363">
    <property type="interactions" value="86"/>
</dbReference>
<dbReference type="FunCoup" id="Q9UHA2">
    <property type="interactions" value="469"/>
</dbReference>
<dbReference type="IntAct" id="Q9UHA2">
    <property type="interactions" value="74"/>
</dbReference>
<dbReference type="STRING" id="9606.ENSP00000401115"/>
<dbReference type="iPTMnet" id="Q9UHA2"/>
<dbReference type="PhosphoSitePlus" id="Q9UHA2"/>
<dbReference type="BioMuta" id="SS18L2"/>
<dbReference type="DMDM" id="24418678"/>
<dbReference type="jPOST" id="Q9UHA2"/>
<dbReference type="MassIVE" id="Q9UHA2"/>
<dbReference type="PaxDb" id="9606-ENSP00000401115"/>
<dbReference type="PeptideAtlas" id="Q9UHA2"/>
<dbReference type="ProteomicsDB" id="84290"/>
<dbReference type="Pumba" id="Q9UHA2"/>
<dbReference type="Antibodypedia" id="29253">
    <property type="antibodies" value="27 antibodies from 13 providers"/>
</dbReference>
<dbReference type="DNASU" id="51188"/>
<dbReference type="Ensembl" id="ENST00000011691.6">
    <property type="protein sequence ID" value="ENSP00000011691.4"/>
    <property type="gene ID" value="ENSG00000008324.12"/>
</dbReference>
<dbReference type="Ensembl" id="ENST00000447630.5">
    <property type="protein sequence ID" value="ENSP00000401115.1"/>
    <property type="gene ID" value="ENSG00000008324.12"/>
</dbReference>
<dbReference type="GeneID" id="51188"/>
<dbReference type="KEGG" id="hsa:51188"/>
<dbReference type="MANE-Select" id="ENST00000011691.6">
    <property type="protein sequence ID" value="ENSP00000011691.4"/>
    <property type="RefSeq nucleotide sequence ID" value="NM_001370300.1"/>
    <property type="RefSeq protein sequence ID" value="NP_001357229.1"/>
</dbReference>
<dbReference type="UCSC" id="uc003clk.1">
    <property type="organism name" value="human"/>
</dbReference>
<dbReference type="AGR" id="HGNC:15593"/>
<dbReference type="CTD" id="51188"/>
<dbReference type="DisGeNET" id="51188"/>
<dbReference type="GeneCards" id="SS18L2"/>
<dbReference type="HGNC" id="HGNC:15593">
    <property type="gene designation" value="SS18L2"/>
</dbReference>
<dbReference type="HPA" id="ENSG00000008324">
    <property type="expression patterns" value="Low tissue specificity"/>
</dbReference>
<dbReference type="MIM" id="606473">
    <property type="type" value="gene"/>
</dbReference>
<dbReference type="neXtProt" id="NX_Q9UHA2"/>
<dbReference type="OpenTargets" id="ENSG00000008324"/>
<dbReference type="PharmGKB" id="PA37990"/>
<dbReference type="VEuPathDB" id="HostDB:ENSG00000008324"/>
<dbReference type="eggNOG" id="KOG3227">
    <property type="taxonomic scope" value="Eukaryota"/>
</dbReference>
<dbReference type="GeneTree" id="ENSGT00940000160407"/>
<dbReference type="HOGENOM" id="CLU_164146_1_0_1"/>
<dbReference type="InParanoid" id="Q9UHA2"/>
<dbReference type="OMA" id="AECVQHQ"/>
<dbReference type="OrthoDB" id="10265171at2759"/>
<dbReference type="PAN-GO" id="Q9UHA2">
    <property type="GO annotations" value="3 GO annotations based on evolutionary models"/>
</dbReference>
<dbReference type="PhylomeDB" id="Q9UHA2"/>
<dbReference type="PathwayCommons" id="Q9UHA2"/>
<dbReference type="SignaLink" id="Q9UHA2"/>
<dbReference type="BioGRID-ORCS" id="51188">
    <property type="hits" value="833 hits in 1160 CRISPR screens"/>
</dbReference>
<dbReference type="ChiTaRS" id="SS18L2">
    <property type="organism name" value="human"/>
</dbReference>
<dbReference type="GenomeRNAi" id="51188"/>
<dbReference type="Pharos" id="Q9UHA2">
    <property type="development level" value="Tdark"/>
</dbReference>
<dbReference type="PRO" id="PR:Q9UHA2"/>
<dbReference type="Proteomes" id="UP000005640">
    <property type="component" value="Chromosome 3"/>
</dbReference>
<dbReference type="RNAct" id="Q9UHA2">
    <property type="molecule type" value="protein"/>
</dbReference>
<dbReference type="Bgee" id="ENSG00000008324">
    <property type="expression patterns" value="Expressed in secondary oocyte and 203 other cell types or tissues"/>
</dbReference>
<dbReference type="ExpressionAtlas" id="Q9UHA2">
    <property type="expression patterns" value="baseline and differential"/>
</dbReference>
<dbReference type="InterPro" id="IPR007726">
    <property type="entry name" value="SS18_N"/>
</dbReference>
<dbReference type="Pfam" id="PF05030">
    <property type="entry name" value="SSXT"/>
    <property type="match status" value="1"/>
</dbReference>
<gene>
    <name type="primary">SS18L2</name>
</gene>
<accession>Q9UHA2</accession>
<accession>B2R5L1</accession>
<reference key="1">
    <citation type="submission" date="1999-11" db="EMBL/GenBank/DDBJ databases">
        <title>Novel genes expressed in human dendritic cells.</title>
        <authorList>
            <person name="Li Y."/>
            <person name="Wang G."/>
            <person name="Gu Y."/>
            <person name="Tu Y."/>
            <person name="Gu W."/>
            <person name="Wang Y."/>
            <person name="Han Z."/>
            <person name="Chen Z."/>
        </authorList>
    </citation>
    <scope>NUCLEOTIDE SEQUENCE [LARGE SCALE MRNA]</scope>
    <source>
        <tissue>Dendritic cell</tissue>
    </source>
</reference>
<reference key="2">
    <citation type="journal article" date="2004" name="Nat. Genet.">
        <title>Complete sequencing and characterization of 21,243 full-length human cDNAs.</title>
        <authorList>
            <person name="Ota T."/>
            <person name="Suzuki Y."/>
            <person name="Nishikawa T."/>
            <person name="Otsuki T."/>
            <person name="Sugiyama T."/>
            <person name="Irie R."/>
            <person name="Wakamatsu A."/>
            <person name="Hayashi K."/>
            <person name="Sato H."/>
            <person name="Nagai K."/>
            <person name="Kimura K."/>
            <person name="Makita H."/>
            <person name="Sekine M."/>
            <person name="Obayashi M."/>
            <person name="Nishi T."/>
            <person name="Shibahara T."/>
            <person name="Tanaka T."/>
            <person name="Ishii S."/>
            <person name="Yamamoto J."/>
            <person name="Saito K."/>
            <person name="Kawai Y."/>
            <person name="Isono Y."/>
            <person name="Nakamura Y."/>
            <person name="Nagahari K."/>
            <person name="Murakami K."/>
            <person name="Yasuda T."/>
            <person name="Iwayanagi T."/>
            <person name="Wagatsuma M."/>
            <person name="Shiratori A."/>
            <person name="Sudo H."/>
            <person name="Hosoiri T."/>
            <person name="Kaku Y."/>
            <person name="Kodaira H."/>
            <person name="Kondo H."/>
            <person name="Sugawara M."/>
            <person name="Takahashi M."/>
            <person name="Kanda K."/>
            <person name="Yokoi T."/>
            <person name="Furuya T."/>
            <person name="Kikkawa E."/>
            <person name="Omura Y."/>
            <person name="Abe K."/>
            <person name="Kamihara K."/>
            <person name="Katsuta N."/>
            <person name="Sato K."/>
            <person name="Tanikawa M."/>
            <person name="Yamazaki M."/>
            <person name="Ninomiya K."/>
            <person name="Ishibashi T."/>
            <person name="Yamashita H."/>
            <person name="Murakawa K."/>
            <person name="Fujimori K."/>
            <person name="Tanai H."/>
            <person name="Kimata M."/>
            <person name="Watanabe M."/>
            <person name="Hiraoka S."/>
            <person name="Chiba Y."/>
            <person name="Ishida S."/>
            <person name="Ono Y."/>
            <person name="Takiguchi S."/>
            <person name="Watanabe S."/>
            <person name="Yosida M."/>
            <person name="Hotuta T."/>
            <person name="Kusano J."/>
            <person name="Kanehori K."/>
            <person name="Takahashi-Fujii A."/>
            <person name="Hara H."/>
            <person name="Tanase T.-O."/>
            <person name="Nomura Y."/>
            <person name="Togiya S."/>
            <person name="Komai F."/>
            <person name="Hara R."/>
            <person name="Takeuchi K."/>
            <person name="Arita M."/>
            <person name="Imose N."/>
            <person name="Musashino K."/>
            <person name="Yuuki H."/>
            <person name="Oshima A."/>
            <person name="Sasaki N."/>
            <person name="Aotsuka S."/>
            <person name="Yoshikawa Y."/>
            <person name="Matsunawa H."/>
            <person name="Ichihara T."/>
            <person name="Shiohata N."/>
            <person name="Sano S."/>
            <person name="Moriya S."/>
            <person name="Momiyama H."/>
            <person name="Satoh N."/>
            <person name="Takami S."/>
            <person name="Terashima Y."/>
            <person name="Suzuki O."/>
            <person name="Nakagawa S."/>
            <person name="Senoh A."/>
            <person name="Mizoguchi H."/>
            <person name="Goto Y."/>
            <person name="Shimizu F."/>
            <person name="Wakebe H."/>
            <person name="Hishigaki H."/>
            <person name="Watanabe T."/>
            <person name="Sugiyama A."/>
            <person name="Takemoto M."/>
            <person name="Kawakami B."/>
            <person name="Yamazaki M."/>
            <person name="Watanabe K."/>
            <person name="Kumagai A."/>
            <person name="Itakura S."/>
            <person name="Fukuzumi Y."/>
            <person name="Fujimori Y."/>
            <person name="Komiyama M."/>
            <person name="Tashiro H."/>
            <person name="Tanigami A."/>
            <person name="Fujiwara T."/>
            <person name="Ono T."/>
            <person name="Yamada K."/>
            <person name="Fujii Y."/>
            <person name="Ozaki K."/>
            <person name="Hirao M."/>
            <person name="Ohmori Y."/>
            <person name="Kawabata A."/>
            <person name="Hikiji T."/>
            <person name="Kobatake N."/>
            <person name="Inagaki H."/>
            <person name="Ikema Y."/>
            <person name="Okamoto S."/>
            <person name="Okitani R."/>
            <person name="Kawakami T."/>
            <person name="Noguchi S."/>
            <person name="Itoh T."/>
            <person name="Shigeta K."/>
            <person name="Senba T."/>
            <person name="Matsumura K."/>
            <person name="Nakajima Y."/>
            <person name="Mizuno T."/>
            <person name="Morinaga M."/>
            <person name="Sasaki M."/>
            <person name="Togashi T."/>
            <person name="Oyama M."/>
            <person name="Hata H."/>
            <person name="Watanabe M."/>
            <person name="Komatsu T."/>
            <person name="Mizushima-Sugano J."/>
            <person name="Satoh T."/>
            <person name="Shirai Y."/>
            <person name="Takahashi Y."/>
            <person name="Nakagawa K."/>
            <person name="Okumura K."/>
            <person name="Nagase T."/>
            <person name="Nomura N."/>
            <person name="Kikuchi H."/>
            <person name="Masuho Y."/>
            <person name="Yamashita R."/>
            <person name="Nakai K."/>
            <person name="Yada T."/>
            <person name="Nakamura Y."/>
            <person name="Ohara O."/>
            <person name="Isogai T."/>
            <person name="Sugano S."/>
        </authorList>
    </citation>
    <scope>NUCLEOTIDE SEQUENCE [LARGE SCALE MRNA]</scope>
    <source>
        <tissue>Thymus</tissue>
    </source>
</reference>
<reference key="3">
    <citation type="submission" date="2005-07" db="EMBL/GenBank/DDBJ databases">
        <authorList>
            <person name="Mural R.J."/>
            <person name="Istrail S."/>
            <person name="Sutton G.G."/>
            <person name="Florea L."/>
            <person name="Halpern A.L."/>
            <person name="Mobarry C.M."/>
            <person name="Lippert R."/>
            <person name="Walenz B."/>
            <person name="Shatkay H."/>
            <person name="Dew I."/>
            <person name="Miller J.R."/>
            <person name="Flanigan M.J."/>
            <person name="Edwards N.J."/>
            <person name="Bolanos R."/>
            <person name="Fasulo D."/>
            <person name="Halldorsson B.V."/>
            <person name="Hannenhalli S."/>
            <person name="Turner R."/>
            <person name="Yooseph S."/>
            <person name="Lu F."/>
            <person name="Nusskern D.R."/>
            <person name="Shue B.C."/>
            <person name="Zheng X.H."/>
            <person name="Zhong F."/>
            <person name="Delcher A.L."/>
            <person name="Huson D.H."/>
            <person name="Kravitz S.A."/>
            <person name="Mouchard L."/>
            <person name="Reinert K."/>
            <person name="Remington K.A."/>
            <person name="Clark A.G."/>
            <person name="Waterman M.S."/>
            <person name="Eichler E.E."/>
            <person name="Adams M.D."/>
            <person name="Hunkapiller M.W."/>
            <person name="Myers E.W."/>
            <person name="Venter J.C."/>
        </authorList>
    </citation>
    <scope>NUCLEOTIDE SEQUENCE [LARGE SCALE GENOMIC DNA]</scope>
</reference>
<reference key="4">
    <citation type="journal article" date="2004" name="Genome Res.">
        <title>The status, quality, and expansion of the NIH full-length cDNA project: the Mammalian Gene Collection (MGC).</title>
        <authorList>
            <consortium name="The MGC Project Team"/>
        </authorList>
    </citation>
    <scope>NUCLEOTIDE SEQUENCE [LARGE SCALE MRNA]</scope>
    <source>
        <tissue>Testis</tissue>
    </source>
</reference>
<proteinExistence type="evidence at protein level"/>
<feature type="chain" id="PRO_0000181826" description="SS18-like protein 2">
    <location>
        <begin position="1"/>
        <end position="77"/>
    </location>
</feature>
<feature type="short sequence motif" description="SH2-binding" evidence="1">
    <location>
        <begin position="50"/>
        <end position="53"/>
    </location>
</feature>
<keyword id="KW-1267">Proteomics identification</keyword>
<keyword id="KW-1185">Reference proteome</keyword>
<comment type="interaction">
    <interactant intactId="EBI-10962400">
        <id>Q9UHA2</id>
    </interactant>
    <interactant intactId="EBI-359031">
        <id>Q15006</id>
        <label>EMC2</label>
    </interactant>
    <organismsDiffer>false</organismsDiffer>
    <experiments>3</experiments>
</comment>
<comment type="interaction">
    <interactant intactId="EBI-10962400">
        <id>Q9UHA2</id>
    </interactant>
    <interactant intactId="EBI-1046668">
        <id>P63215</id>
        <label>GNG3</label>
    </interactant>
    <organismsDiffer>false</organismsDiffer>
    <experiments>3</experiments>
</comment>
<comment type="interaction">
    <interactant intactId="EBI-10962400">
        <id>Q9UHA2</id>
    </interactant>
    <interactant intactId="EBI-14035066">
        <id>Q86Y78</id>
        <label>LYPD6</label>
    </interactant>
    <organismsDiffer>false</organismsDiffer>
    <experiments>3</experiments>
</comment>
<comment type="interaction">
    <interactant intactId="EBI-10962400">
        <id>Q9UHA2</id>
    </interactant>
    <interactant intactId="EBI-17671489">
        <id>Q9P267-2</id>
        <label>MBD5</label>
    </interactant>
    <organismsDiffer>false</organismsDiffer>
    <experiments>3</experiments>
</comment>
<comment type="interaction">
    <interactant intactId="EBI-10962400">
        <id>Q9UHA2</id>
    </interactant>
    <interactant intactId="EBI-11343485">
        <id>Q86X19</id>
        <label>TMEM17</label>
    </interactant>
    <organismsDiffer>false</organismsDiffer>
    <experiments>3</experiments>
</comment>
<comment type="interaction">
    <interactant intactId="EBI-10962400">
        <id>Q9UHA2</id>
    </interactant>
    <interactant intactId="EBI-12150045">
        <id>Q9H869-2</id>
        <label>YY1AP1</label>
    </interactant>
    <organismsDiffer>false</organismsDiffer>
    <experiments>4</experiments>
</comment>
<comment type="similarity">
    <text evidence="2">Belongs to the SS18 family.</text>
</comment>
<protein>
    <recommendedName>
        <fullName>SS18-like protein 2</fullName>
    </recommendedName>
    <alternativeName>
        <fullName>SYT homolog 2</fullName>
    </alternativeName>
</protein>
<organism>
    <name type="scientific">Homo sapiens</name>
    <name type="common">Human</name>
    <dbReference type="NCBI Taxonomy" id="9606"/>
    <lineage>
        <taxon>Eukaryota</taxon>
        <taxon>Metazoa</taxon>
        <taxon>Chordata</taxon>
        <taxon>Craniata</taxon>
        <taxon>Vertebrata</taxon>
        <taxon>Euteleostomi</taxon>
        <taxon>Mammalia</taxon>
        <taxon>Eutheria</taxon>
        <taxon>Euarchontoglires</taxon>
        <taxon>Primates</taxon>
        <taxon>Haplorrhini</taxon>
        <taxon>Catarrhini</taxon>
        <taxon>Hominidae</taxon>
        <taxon>Homo</taxon>
    </lineage>
</organism>